<gene>
    <name evidence="9" type="primary">Krt74</name>
    <name evidence="6" type="synonym">Kb37</name>
</gene>
<keyword id="KW-0175">Coiled coil</keyword>
<keyword id="KW-0403">Intermediate filament</keyword>
<keyword id="KW-0416">Keratin</keyword>
<keyword id="KW-1185">Reference proteome</keyword>
<evidence type="ECO:0000250" key="1">
    <source>
        <dbReference type="UniProtKB" id="Q7RT57"/>
    </source>
</evidence>
<evidence type="ECO:0000255" key="2"/>
<evidence type="ECO:0000255" key="3">
    <source>
        <dbReference type="PROSITE-ProRule" id="PRU01188"/>
    </source>
</evidence>
<evidence type="ECO:0000256" key="4">
    <source>
        <dbReference type="SAM" id="MobiDB-lite"/>
    </source>
</evidence>
<evidence type="ECO:0000269" key="5">
    <source>
    </source>
</evidence>
<evidence type="ECO:0000303" key="6">
    <source>
    </source>
</evidence>
<evidence type="ECO:0000305" key="7"/>
<evidence type="ECO:0000312" key="8">
    <source>
        <dbReference type="EMBL" id="DAA02231.1"/>
    </source>
</evidence>
<evidence type="ECO:0000312" key="9">
    <source>
        <dbReference type="MGI" id="MGI:3629975"/>
    </source>
</evidence>
<proteinExistence type="inferred from homology"/>
<dbReference type="EMBL" id="AC104862">
    <property type="status" value="NOT_ANNOTATED_CDS"/>
    <property type="molecule type" value="Genomic_DNA"/>
</dbReference>
<dbReference type="EMBL" id="BK003986">
    <property type="protein sequence ID" value="DAA02231.1"/>
    <property type="molecule type" value="mRNA"/>
</dbReference>
<dbReference type="SMR" id="Q6IFZ9"/>
<dbReference type="FunCoup" id="Q6IFZ9">
    <property type="interactions" value="23"/>
</dbReference>
<dbReference type="iPTMnet" id="Q6IFZ9"/>
<dbReference type="PhosphoSitePlus" id="Q6IFZ9"/>
<dbReference type="jPOST" id="Q6IFZ9"/>
<dbReference type="PaxDb" id="10090-ENSMUSP00000085335"/>
<dbReference type="PeptideAtlas" id="Q6IFZ9"/>
<dbReference type="ProteomicsDB" id="269056"/>
<dbReference type="AGR" id="MGI:3629975"/>
<dbReference type="MGI" id="MGI:3629975">
    <property type="gene designation" value="Krt74"/>
</dbReference>
<dbReference type="eggNOG" id="ENOG502RNQG">
    <property type="taxonomic scope" value="Eukaryota"/>
</dbReference>
<dbReference type="HOGENOM" id="CLU_012560_6_1_1"/>
<dbReference type="InParanoid" id="Q6IFZ9"/>
<dbReference type="PhylomeDB" id="Q6IFZ9"/>
<dbReference type="TreeFam" id="TF317854"/>
<dbReference type="Reactome" id="R-MMU-6805567">
    <property type="pathway name" value="Keratinization"/>
</dbReference>
<dbReference type="Reactome" id="R-MMU-6809371">
    <property type="pathway name" value="Formation of the cornified envelope"/>
</dbReference>
<dbReference type="PRO" id="PR:Q6IFZ9"/>
<dbReference type="Proteomes" id="UP000000589">
    <property type="component" value="Unplaced"/>
</dbReference>
<dbReference type="RNAct" id="Q6IFZ9">
    <property type="molecule type" value="protein"/>
</dbReference>
<dbReference type="GO" id="GO:0045095">
    <property type="term" value="C:keratin filament"/>
    <property type="evidence" value="ECO:0007669"/>
    <property type="project" value="InterPro"/>
</dbReference>
<dbReference type="FunFam" id="1.20.5.1160:FF:000001">
    <property type="entry name" value="Keratin type II"/>
    <property type="match status" value="1"/>
</dbReference>
<dbReference type="FunFam" id="1.20.5.170:FF:000004">
    <property type="entry name" value="Keratin, type II cytoskeletal 5"/>
    <property type="match status" value="1"/>
</dbReference>
<dbReference type="FunFam" id="1.20.5.500:FF:000001">
    <property type="entry name" value="Type II keratin 23"/>
    <property type="match status" value="1"/>
</dbReference>
<dbReference type="Gene3D" id="1.20.5.170">
    <property type="match status" value="1"/>
</dbReference>
<dbReference type="Gene3D" id="1.20.5.500">
    <property type="entry name" value="Single helix bin"/>
    <property type="match status" value="1"/>
</dbReference>
<dbReference type="Gene3D" id="1.20.5.1160">
    <property type="entry name" value="Vasodilator-stimulated phosphoprotein"/>
    <property type="match status" value="1"/>
</dbReference>
<dbReference type="InterPro" id="IPR018039">
    <property type="entry name" value="IF_conserved"/>
</dbReference>
<dbReference type="InterPro" id="IPR039008">
    <property type="entry name" value="IF_rod_dom"/>
</dbReference>
<dbReference type="InterPro" id="IPR032444">
    <property type="entry name" value="Keratin_2_head"/>
</dbReference>
<dbReference type="InterPro" id="IPR003054">
    <property type="entry name" value="Keratin_II"/>
</dbReference>
<dbReference type="PANTHER" id="PTHR45616">
    <property type="entry name" value="GATA-TYPE DOMAIN-CONTAINING PROTEIN"/>
    <property type="match status" value="1"/>
</dbReference>
<dbReference type="PANTHER" id="PTHR45616:SF5">
    <property type="entry name" value="KERATIN, TYPE II CYTOSKELETAL 74"/>
    <property type="match status" value="1"/>
</dbReference>
<dbReference type="Pfam" id="PF00038">
    <property type="entry name" value="Filament"/>
    <property type="match status" value="1"/>
</dbReference>
<dbReference type="Pfam" id="PF16208">
    <property type="entry name" value="Keratin_2_head"/>
    <property type="match status" value="1"/>
</dbReference>
<dbReference type="PRINTS" id="PR01276">
    <property type="entry name" value="TYPE2KERATIN"/>
</dbReference>
<dbReference type="SMART" id="SM01391">
    <property type="entry name" value="Filament"/>
    <property type="match status" value="1"/>
</dbReference>
<dbReference type="SUPFAM" id="SSF64593">
    <property type="entry name" value="Intermediate filament protein, coiled coil region"/>
    <property type="match status" value="3"/>
</dbReference>
<dbReference type="PROSITE" id="PS00226">
    <property type="entry name" value="IF_ROD_1"/>
    <property type="match status" value="1"/>
</dbReference>
<dbReference type="PROSITE" id="PS51842">
    <property type="entry name" value="IF_ROD_2"/>
    <property type="match status" value="1"/>
</dbReference>
<feature type="chain" id="PRO_0000361694" description="Keratin, type II cytoskeletal 74">
    <location>
        <begin position="1"/>
        <end position="495"/>
    </location>
</feature>
<feature type="domain" description="IF rod" evidence="3">
    <location>
        <begin position="106"/>
        <end position="419"/>
    </location>
</feature>
<feature type="region of interest" description="Head" evidence="2">
    <location>
        <begin position="1"/>
        <end position="105"/>
    </location>
</feature>
<feature type="region of interest" description="Coil 1A" evidence="2">
    <location>
        <begin position="106"/>
        <end position="141"/>
    </location>
</feature>
<feature type="region of interest" description="Linker 1" evidence="2">
    <location>
        <begin position="142"/>
        <end position="160"/>
    </location>
</feature>
<feature type="region of interest" description="Coil 1B" evidence="2">
    <location>
        <begin position="161"/>
        <end position="252"/>
    </location>
</feature>
<feature type="region of interest" description="Linker 12" evidence="2">
    <location>
        <begin position="253"/>
        <end position="276"/>
    </location>
</feature>
<feature type="region of interest" description="Coil 2" evidence="2">
    <location>
        <begin position="277"/>
        <end position="415"/>
    </location>
</feature>
<feature type="region of interest" description="Tail" evidence="2">
    <location>
        <begin position="416"/>
        <end position="495"/>
    </location>
</feature>
<feature type="region of interest" description="Disordered" evidence="4">
    <location>
        <begin position="449"/>
        <end position="495"/>
    </location>
</feature>
<feature type="compositionally biased region" description="Polar residues" evidence="4">
    <location>
        <begin position="457"/>
        <end position="472"/>
    </location>
</feature>
<feature type="site" description="Stutter" evidence="2">
    <location>
        <position position="357"/>
    </location>
</feature>
<reference key="1">
    <citation type="journal article" date="2009" name="PLoS Biol.">
        <title>Lineage-specific biology revealed by a finished genome assembly of the mouse.</title>
        <authorList>
            <person name="Church D.M."/>
            <person name="Goodstadt L."/>
            <person name="Hillier L.W."/>
            <person name="Zody M.C."/>
            <person name="Goldstein S."/>
            <person name="She X."/>
            <person name="Bult C.J."/>
            <person name="Agarwala R."/>
            <person name="Cherry J.L."/>
            <person name="DiCuccio M."/>
            <person name="Hlavina W."/>
            <person name="Kapustin Y."/>
            <person name="Meric P."/>
            <person name="Maglott D."/>
            <person name="Birtle Z."/>
            <person name="Marques A.C."/>
            <person name="Graves T."/>
            <person name="Zhou S."/>
            <person name="Teague B."/>
            <person name="Potamousis K."/>
            <person name="Churas C."/>
            <person name="Place M."/>
            <person name="Herschleb J."/>
            <person name="Runnheim R."/>
            <person name="Forrest D."/>
            <person name="Amos-Landgraf J."/>
            <person name="Schwartz D.C."/>
            <person name="Cheng Z."/>
            <person name="Lindblad-Toh K."/>
            <person name="Eichler E.E."/>
            <person name="Ponting C.P."/>
        </authorList>
    </citation>
    <scope>NUCLEOTIDE SEQUENCE [LARGE SCALE GENOMIC DNA]</scope>
    <source>
        <strain>C57BL/6J</strain>
    </source>
</reference>
<reference evidence="7 8" key="2">
    <citation type="journal article" date="2004" name="Eur. J. Cell Biol.">
        <title>Comprehensive analysis of keratin gene clusters in humans and rodents.</title>
        <authorList>
            <person name="Hesse M."/>
            <person name="Zimek A."/>
            <person name="Weber K."/>
            <person name="Magin T.M."/>
        </authorList>
    </citation>
    <scope>IDENTIFICATION</scope>
</reference>
<reference key="3">
    <citation type="journal article" date="2014" name="PLoS ONE">
        <title>Autosomal recessive transmission of a rare KRT74 variant causes hair and nail ectodermal dysplasia: allelism with dominant woolly hair/hypotrichosis.</title>
        <authorList>
            <person name="Raykova D."/>
            <person name="Klar J."/>
            <person name="Azhar A."/>
            <person name="Khan T.N."/>
            <person name="Malik N.A."/>
            <person name="Iqbal M."/>
            <person name="Tariq M."/>
            <person name="Baig S.M."/>
            <person name="Dahl N."/>
        </authorList>
    </citation>
    <scope>TISSUE SPECIFICITY</scope>
</reference>
<organism>
    <name type="scientific">Mus musculus</name>
    <name type="common">Mouse</name>
    <dbReference type="NCBI Taxonomy" id="10090"/>
    <lineage>
        <taxon>Eukaryota</taxon>
        <taxon>Metazoa</taxon>
        <taxon>Chordata</taxon>
        <taxon>Craniata</taxon>
        <taxon>Vertebrata</taxon>
        <taxon>Euteleostomi</taxon>
        <taxon>Mammalia</taxon>
        <taxon>Eutheria</taxon>
        <taxon>Euarchontoglires</taxon>
        <taxon>Glires</taxon>
        <taxon>Rodentia</taxon>
        <taxon>Myomorpha</taxon>
        <taxon>Muroidea</taxon>
        <taxon>Muridae</taxon>
        <taxon>Murinae</taxon>
        <taxon>Mus</taxon>
        <taxon>Mus</taxon>
    </lineage>
</organism>
<sequence length="495" mass="54747">MASCHTAGHRTGLSSRSLYSLGGNQHTSYNVAGGSARGTRHSFGYGYGGGRGSGFANSMFGSMALGANCPSVCLSGGIYQVTVNKSLLAPLNVELDPEIQKVRAQEREQIKALNDKFASFIDKVRFLEQQNQVLQTKWELLQQLDLSNCRRNLEPVYEAHISNLRKQLEMLSGERVRLDPDLRKMRDVVEDYKKRYEVEITQRTAAENEFVLLKKDADAAYTVKVELQDKVDSLDKDIKFLKCLYDEEISQLQTHASETSVILSMDNNRDLDLAGIIAEVRAHYEDIALKSKAEAEMLYQTKIQELQLAAGCYGDSLKHIRSEMLELDRLIQRIRCDIANVKKQCSNLEMAIADAEQRGDSALKDAWAKLDELEGALQQAKEELARMLCEYQELMGLKLSLDVEIATYRKLLEGEENRMSGENPSSVSVSVISSSCGSCGYHPSSMISDSEAGNAVGSPSTPRNSQSKTRGSSVDPRDAQDESAAAAGTLARKTT</sequence>
<protein>
    <recommendedName>
        <fullName evidence="1">Keratin, type II cytoskeletal 74</fullName>
    </recommendedName>
    <alternativeName>
        <fullName evidence="1">Keratin-74</fullName>
        <shortName>K74</shortName>
    </alternativeName>
    <alternativeName>
        <fullName>Type-II keratin Kb37</fullName>
    </alternativeName>
</protein>
<comment type="function">
    <text evidence="1">Has a role in hair formation. Specific component of keratin intermediate filaments in the inner root sheath (IRS) of the hair follicle (By similarity).</text>
</comment>
<comment type="subunit">
    <text evidence="7">Heterotetramer of two type I and two type II keratins.</text>
</comment>
<comment type="tissue specificity">
    <text evidence="5">Expressed in epidermis with a particularly strong staining in the nail matrix, nail bed and hyponychium (at protein level).</text>
</comment>
<comment type="miscellaneous">
    <text evidence="7">There are two types of cytoskeletal and microfibrillar keratin, I (acidic) and II (neutral to basic) (40-55 and 56-70 kDa, respectively).</text>
</comment>
<comment type="similarity">
    <text evidence="3">Belongs to the intermediate filament family.</text>
</comment>
<name>K2C74_MOUSE</name>
<accession>Q6IFZ9</accession>